<accession>Q8IBH7</accession>
<comment type="function">
    <text evidence="2 11 12 13">Functions in the early steps of protein synthesis by forming a ternary complex with GTP and initiator tRNA (By similarity). May regulate protein translation in response to amino acid starvation (Probable). May regulate protein at various stages of parasite development (Probable).</text>
</comment>
<comment type="subcellular location">
    <subcellularLocation>
        <location evidence="6">Cytoplasm</location>
        <location evidence="6">Stress granule</location>
    </subcellularLocation>
    <text evidence="1 6">When phosphorylated at Ser-59, localizes to stress granules in schizonts and male and female gametocytes (PubMed:22355110). When phosphorylated at Ser-59, localizes to stress granules in mosquito salivary glands (By similarity).</text>
</comment>
<comment type="developmental stage">
    <text evidence="6 8">Expressed during the asexual blood stage, including rings, trophozoites, schizonts (at protein level) (PubMed:22355110, PubMed:29241041). Expressed in male and female gametocytes (at protein level) (PubMed:22355110).</text>
</comment>
<comment type="PTM">
    <text evidence="1 5 6 7 8 9">Phosphorylated at Ser-59 by eIK1 in response to amino acid starvation (PubMed:19435497). Phosphorylates at Ser-59 in schizonts and gametocytes but not in rings and young trophozoites (PubMed:22355110, PubMed:29241041). Phosphorylates at Ser-59 by eIK2 in salivary gland sporozoites but not in midgut and hemocoel sporozoites (By similarity). Dephosphorylated at Ser-59 by UIS2 (PubMed:26735921). Phosphorylation of eIF2alpha subunit of the pre-initiation complex eIF2 inhibits recycling of inactive eIF2-GDP to active eIF2-GTP by limiting the activity of the guanine nucleotide exchange factor eIF2B and thus, inhibits protein translation (PubMed:19435497).</text>
</comment>
<comment type="similarity">
    <text evidence="10">Belongs to the eIF-2-alpha family.</text>
</comment>
<proteinExistence type="evidence at protein level"/>
<protein>
    <recommendedName>
        <fullName evidence="10">Eukaryotic translation initiation factor 2 subunit 1</fullName>
    </recommendedName>
    <alternativeName>
        <fullName evidence="9">Eukaryotic translation initiation factor 2 subunit alpha</fullName>
        <shortName evidence="9">PfeIF2alpha</shortName>
    </alternativeName>
</protein>
<reference evidence="15" key="1">
    <citation type="journal article" date="2002" name="Nature">
        <title>Genome sequence of the human malaria parasite Plasmodium falciparum.</title>
        <authorList>
            <person name="Gardner M.J."/>
            <person name="Hall N."/>
            <person name="Fung E."/>
            <person name="White O."/>
            <person name="Berriman M."/>
            <person name="Hyman R.W."/>
            <person name="Carlton J.M."/>
            <person name="Pain A."/>
            <person name="Nelson K.E."/>
            <person name="Bowman S."/>
            <person name="Paulsen I.T."/>
            <person name="James K.D."/>
            <person name="Eisen J.A."/>
            <person name="Rutherford K.M."/>
            <person name="Salzberg S.L."/>
            <person name="Craig A."/>
            <person name="Kyes S."/>
            <person name="Chan M.-S."/>
            <person name="Nene V."/>
            <person name="Shallom S.J."/>
            <person name="Suh B."/>
            <person name="Peterson J."/>
            <person name="Angiuoli S."/>
            <person name="Pertea M."/>
            <person name="Allen J."/>
            <person name="Selengut J."/>
            <person name="Haft D."/>
            <person name="Mather M.W."/>
            <person name="Vaidya A.B."/>
            <person name="Martin D.M.A."/>
            <person name="Fairlamb A.H."/>
            <person name="Fraunholz M.J."/>
            <person name="Roos D.S."/>
            <person name="Ralph S.A."/>
            <person name="McFadden G.I."/>
            <person name="Cummings L.M."/>
            <person name="Subramanian G.M."/>
            <person name="Mungall C."/>
            <person name="Venter J.C."/>
            <person name="Carucci D.J."/>
            <person name="Hoffman S.L."/>
            <person name="Newbold C."/>
            <person name="Davis R.W."/>
            <person name="Fraser C.M."/>
            <person name="Barrell B.G."/>
        </authorList>
    </citation>
    <scope>NUCLEOTIDE SEQUENCE [LARGE SCALE GENOMIC DNA]</scope>
    <source>
        <strain evidence="15">3D7</strain>
    </source>
</reference>
<reference evidence="15" key="2">
    <citation type="journal article" date="2002" name="Nature">
        <title>Sequence of Plasmodium falciparum chromosomes 1, 3-9 and 13.</title>
        <authorList>
            <person name="Hall N."/>
            <person name="Pain A."/>
            <person name="Berriman M."/>
            <person name="Churcher C.M."/>
            <person name="Harris B."/>
            <person name="Harris D."/>
            <person name="Mungall K.L."/>
            <person name="Bowman S."/>
            <person name="Atkin R."/>
            <person name="Baker S."/>
            <person name="Barron A."/>
            <person name="Brooks K."/>
            <person name="Buckee C.O."/>
            <person name="Burrows C."/>
            <person name="Cherevach I."/>
            <person name="Chillingworth C."/>
            <person name="Chillingworth T."/>
            <person name="Christodoulou Z."/>
            <person name="Clark L."/>
            <person name="Clark R."/>
            <person name="Corton C."/>
            <person name="Cronin A."/>
            <person name="Davies R.M."/>
            <person name="Davis P."/>
            <person name="Dear P."/>
            <person name="Dearden F."/>
            <person name="Doggett J."/>
            <person name="Feltwell T."/>
            <person name="Goble A."/>
            <person name="Goodhead I."/>
            <person name="Gwilliam R."/>
            <person name="Hamlin N."/>
            <person name="Hance Z."/>
            <person name="Harper D."/>
            <person name="Hauser H."/>
            <person name="Hornsby T."/>
            <person name="Holroyd S."/>
            <person name="Horrocks P."/>
            <person name="Humphray S."/>
            <person name="Jagels K."/>
            <person name="James K.D."/>
            <person name="Johnson D."/>
            <person name="Kerhornou A."/>
            <person name="Knights A."/>
            <person name="Konfortov B."/>
            <person name="Kyes S."/>
            <person name="Larke N."/>
            <person name="Lawson D."/>
            <person name="Lennard N."/>
            <person name="Line A."/>
            <person name="Maddison M."/>
            <person name="Mclean J."/>
            <person name="Mooney P."/>
            <person name="Moule S."/>
            <person name="Murphy L."/>
            <person name="Oliver K."/>
            <person name="Ormond D."/>
            <person name="Price C."/>
            <person name="Quail M.A."/>
            <person name="Rabbinowitsch E."/>
            <person name="Rajandream M.A."/>
            <person name="Rutter S."/>
            <person name="Rutherford K.M."/>
            <person name="Sanders M."/>
            <person name="Simmonds M."/>
            <person name="Seeger K."/>
            <person name="Sharp S."/>
            <person name="Smith R."/>
            <person name="Squares R."/>
            <person name="Squares S."/>
            <person name="Stevens K."/>
            <person name="Taylor K."/>
            <person name="Tivey A."/>
            <person name="Unwin L."/>
            <person name="Whitehead S."/>
            <person name="Woodward J.R."/>
            <person name="Sulston J.E."/>
            <person name="Craig A."/>
            <person name="Newbold C."/>
            <person name="Barrell B.G."/>
        </authorList>
    </citation>
    <scope>NUCLEOTIDE SEQUENCE [LARGE SCALE GENOMIC DNA]</scope>
    <source>
        <strain evidence="15">3D7</strain>
    </source>
</reference>
<reference evidence="10" key="3">
    <citation type="journal article" date="2009" name="Malar. J.">
        <title>PfeIK1, a eukaryotic initiation factor 2alpha kinase of the human malaria parasite Plasmodium falciparum, regulates stress-response to amino-acid starvation.</title>
        <authorList>
            <person name="Fennell C."/>
            <person name="Babbitt S."/>
            <person name="Russo I."/>
            <person name="Wilkes J."/>
            <person name="Ranford-Cartwright L."/>
            <person name="Goldberg D.E."/>
            <person name="Doerig C."/>
        </authorList>
    </citation>
    <scope>FUNCTION</scope>
    <scope>PHOSPHORYLATION AT SER-59</scope>
    <scope>MUTAGENESIS OF SER-59</scope>
</reference>
<reference evidence="10" key="4">
    <citation type="journal article" date="2012" name="Proc. Natl. Acad. Sci. U.S.A.">
        <title>PK4, a eukaryotic initiation factor 2alpha(eIF2alpha) kinase, is essential for the development of the erythrocytic cycle of Plasmodium.</title>
        <authorList>
            <person name="Zhang M."/>
            <person name="Mishra S."/>
            <person name="Sakthivel R."/>
            <person name="Rojas M."/>
            <person name="Ranjan R."/>
            <person name="Sullivan W.J. Jr."/>
            <person name="Fontoura B.M."/>
            <person name="Menard R."/>
            <person name="Dever T.E."/>
            <person name="Nussenzweig V."/>
        </authorList>
    </citation>
    <scope>FUNCTION</scope>
    <scope>SUBCELLULAR LOCATION</scope>
    <scope>DEVELOPMENTAL STAGE</scope>
    <scope>PHOSPHORYLATION AT SER-59</scope>
</reference>
<reference evidence="10" key="5">
    <citation type="journal article" date="2016" name="PLoS Pathog.">
        <title>UIS2: A Unique Phosphatase Required for the Development of Plasmodium Liver Stages.</title>
        <authorList>
            <person name="Zhang M."/>
            <person name="Mishra S."/>
            <person name="Sakthivel R."/>
            <person name="Fontoura B.M."/>
            <person name="Nussenzweig V."/>
        </authorList>
    </citation>
    <scope>PHOSPHORYLATION AT SER-59</scope>
    <scope>MUTAGENESIS OF SER-59</scope>
</reference>
<reference evidence="10" key="6">
    <citation type="journal article" date="2017" name="Cell Host Microbe">
        <title>Inhibiting the Plasmodium eIF2alpha Kinase PK4 Prevents Artemisinin-Induced Latency.</title>
        <authorList>
            <person name="Zhang M."/>
            <person name="Gallego-Delgado J."/>
            <person name="Fernandez-Arias C."/>
            <person name="Waters N.C."/>
            <person name="Rodriguez A."/>
            <person name="Tsuji M."/>
            <person name="Wek R.C."/>
            <person name="Nussenzweig V."/>
            <person name="Sullivan W.J. Jr."/>
        </authorList>
    </citation>
    <scope>FUNCTION</scope>
    <scope>DEVELOPMENTAL STAGE</scope>
    <scope>PHOSPHORYLATION AT SER-59</scope>
</reference>
<dbReference type="EMBL" id="AL844506">
    <property type="protein sequence ID" value="CAD51023.1"/>
    <property type="molecule type" value="Genomic_DNA"/>
</dbReference>
<dbReference type="RefSeq" id="XP_001349177.1">
    <property type="nucleotide sequence ID" value="XM_001349141.1"/>
</dbReference>
<dbReference type="SMR" id="Q8IBH7"/>
<dbReference type="DIP" id="DIP-43610N"/>
<dbReference type="FunCoup" id="Q8IBH7">
    <property type="interactions" value="695"/>
</dbReference>
<dbReference type="IntAct" id="Q8IBH7">
    <property type="interactions" value="2"/>
</dbReference>
<dbReference type="STRING" id="36329.Q8IBH7"/>
<dbReference type="iPTMnet" id="Q8IBH7"/>
<dbReference type="PaxDb" id="5833-PF07_0117"/>
<dbReference type="EnsemblProtists" id="CAD51023">
    <property type="protein sequence ID" value="CAD51023"/>
    <property type="gene ID" value="PF3D7_0728000"/>
</dbReference>
<dbReference type="GeneID" id="2655170"/>
<dbReference type="KEGG" id="pfa:PF3D7_0728000"/>
<dbReference type="VEuPathDB" id="PlasmoDB:PF3D7_0728000"/>
<dbReference type="HOGENOM" id="CLU_033458_0_1_1"/>
<dbReference type="InParanoid" id="Q8IBH7"/>
<dbReference type="OMA" id="WDWLHEL"/>
<dbReference type="OrthoDB" id="1685042at2759"/>
<dbReference type="PhylomeDB" id="Q8IBH7"/>
<dbReference type="Reactome" id="R-PFA-156827">
    <property type="pathway name" value="L13a-mediated translational silencing of Ceruloplasmin expression"/>
</dbReference>
<dbReference type="Reactome" id="R-PFA-72649">
    <property type="pathway name" value="Translation initiation complex formation"/>
</dbReference>
<dbReference type="Reactome" id="R-PFA-72695">
    <property type="pathway name" value="Formation of the ternary complex, and subsequently, the 43S complex"/>
</dbReference>
<dbReference type="Reactome" id="R-PFA-72702">
    <property type="pathway name" value="Ribosomal scanning and start codon recognition"/>
</dbReference>
<dbReference type="Reactome" id="R-PFA-72731">
    <property type="pathway name" value="Recycling of eIF2:GDP"/>
</dbReference>
<dbReference type="Reactome" id="R-PFA-9840373">
    <property type="pathway name" value="Cellular response to mitochondrial stress"/>
</dbReference>
<dbReference type="Proteomes" id="UP000001450">
    <property type="component" value="Chromosome 7"/>
</dbReference>
<dbReference type="GO" id="GO:0010494">
    <property type="term" value="C:cytoplasmic stress granule"/>
    <property type="evidence" value="ECO:0000314"/>
    <property type="project" value="UniProtKB"/>
</dbReference>
<dbReference type="GO" id="GO:0033290">
    <property type="term" value="C:eukaryotic 48S preinitiation complex"/>
    <property type="evidence" value="ECO:0000318"/>
    <property type="project" value="GO_Central"/>
</dbReference>
<dbReference type="GO" id="GO:0005850">
    <property type="term" value="C:eukaryotic translation initiation factor 2 complex"/>
    <property type="evidence" value="ECO:0000250"/>
    <property type="project" value="UniProtKB"/>
</dbReference>
<dbReference type="GO" id="GO:0043022">
    <property type="term" value="F:ribosome binding"/>
    <property type="evidence" value="ECO:0000318"/>
    <property type="project" value="GO_Central"/>
</dbReference>
<dbReference type="GO" id="GO:0003723">
    <property type="term" value="F:RNA binding"/>
    <property type="evidence" value="ECO:0007669"/>
    <property type="project" value="UniProtKB-KW"/>
</dbReference>
<dbReference type="GO" id="GO:0003743">
    <property type="term" value="F:translation initiation factor activity"/>
    <property type="evidence" value="ECO:0000250"/>
    <property type="project" value="GeneDB"/>
</dbReference>
<dbReference type="GO" id="GO:0006417">
    <property type="term" value="P:regulation of translation"/>
    <property type="evidence" value="ECO:0007669"/>
    <property type="project" value="UniProtKB-KW"/>
</dbReference>
<dbReference type="GO" id="GO:0006413">
    <property type="term" value="P:translational initiation"/>
    <property type="evidence" value="ECO:0000250"/>
    <property type="project" value="GeneDB"/>
</dbReference>
<dbReference type="CDD" id="cd04452">
    <property type="entry name" value="S1_IF2_alpha"/>
    <property type="match status" value="1"/>
</dbReference>
<dbReference type="FunFam" id="3.30.70.1130:FF:000003">
    <property type="entry name" value="Eukaryotic translation initiation factor 2 alpha subunit, putative"/>
    <property type="match status" value="1"/>
</dbReference>
<dbReference type="FunFam" id="2.40.50.140:FF:000015">
    <property type="entry name" value="Eukaryotic translation initiation factor 2 subunit alpha"/>
    <property type="match status" value="1"/>
</dbReference>
<dbReference type="Gene3D" id="3.30.70.1130">
    <property type="entry name" value="EIF_2_alpha"/>
    <property type="match status" value="1"/>
</dbReference>
<dbReference type="Gene3D" id="2.40.50.140">
    <property type="entry name" value="Nucleic acid-binding proteins"/>
    <property type="match status" value="1"/>
</dbReference>
<dbReference type="Gene3D" id="1.10.150.190">
    <property type="entry name" value="Translation initiation factor 2, subunit 1, domain 2"/>
    <property type="match status" value="1"/>
</dbReference>
<dbReference type="InterPro" id="IPR012340">
    <property type="entry name" value="NA-bd_OB-fold"/>
</dbReference>
<dbReference type="InterPro" id="IPR003029">
    <property type="entry name" value="S1_domain"/>
</dbReference>
<dbReference type="InterPro" id="IPR044126">
    <property type="entry name" value="S1_IF2_alpha"/>
</dbReference>
<dbReference type="InterPro" id="IPR024055">
    <property type="entry name" value="TIF2_asu_C"/>
</dbReference>
<dbReference type="InterPro" id="IPR024054">
    <property type="entry name" value="TIF2_asu_middle_sf"/>
</dbReference>
<dbReference type="InterPro" id="IPR011488">
    <property type="entry name" value="TIF_2_asu"/>
</dbReference>
<dbReference type="PANTHER" id="PTHR10602">
    <property type="entry name" value="EUKARYOTIC TRANSLATION INITIATION FACTOR 2 SUBUNIT 1"/>
    <property type="match status" value="1"/>
</dbReference>
<dbReference type="PANTHER" id="PTHR10602:SF0">
    <property type="entry name" value="EUKARYOTIC TRANSLATION INITIATION FACTOR 2 SUBUNIT 1"/>
    <property type="match status" value="1"/>
</dbReference>
<dbReference type="Pfam" id="PF07541">
    <property type="entry name" value="EIF_2_alpha"/>
    <property type="match status" value="1"/>
</dbReference>
<dbReference type="Pfam" id="PF00575">
    <property type="entry name" value="S1"/>
    <property type="match status" value="1"/>
</dbReference>
<dbReference type="SMART" id="SM00316">
    <property type="entry name" value="S1"/>
    <property type="match status" value="1"/>
</dbReference>
<dbReference type="SUPFAM" id="SSF110993">
    <property type="entry name" value="eIF-2-alpha, C-terminal domain"/>
    <property type="match status" value="1"/>
</dbReference>
<dbReference type="SUPFAM" id="SSF116742">
    <property type="entry name" value="eIF2alpha middle domain-like"/>
    <property type="match status" value="1"/>
</dbReference>
<dbReference type="SUPFAM" id="SSF50249">
    <property type="entry name" value="Nucleic acid-binding proteins"/>
    <property type="match status" value="1"/>
</dbReference>
<dbReference type="PROSITE" id="PS50126">
    <property type="entry name" value="S1"/>
    <property type="match status" value="1"/>
</dbReference>
<organism evidence="15">
    <name type="scientific">Plasmodium falciparum (isolate 3D7)</name>
    <dbReference type="NCBI Taxonomy" id="36329"/>
    <lineage>
        <taxon>Eukaryota</taxon>
        <taxon>Sar</taxon>
        <taxon>Alveolata</taxon>
        <taxon>Apicomplexa</taxon>
        <taxon>Aconoidasida</taxon>
        <taxon>Haemosporida</taxon>
        <taxon>Plasmodiidae</taxon>
        <taxon>Plasmodium</taxon>
        <taxon>Plasmodium (Laverania)</taxon>
    </lineage>
</organism>
<gene>
    <name evidence="9" type="primary">eIF2alpha</name>
    <name evidence="10" type="ORF">PF07_0117</name>
    <name evidence="14" type="ORF">PF3D7_0728000</name>
</gene>
<keyword id="KW-0963">Cytoplasm</keyword>
<keyword id="KW-0396">Initiation factor</keyword>
<keyword id="KW-0597">Phosphoprotein</keyword>
<keyword id="KW-0648">Protein biosynthesis</keyword>
<keyword id="KW-1185">Reference proteome</keyword>
<keyword id="KW-0694">RNA-binding</keyword>
<keyword id="KW-0810">Translation regulation</keyword>
<sequence>MTEMRVKADLGDCRFYKKKFPEVDDLIMVKVNRIEDMGAYVSILEYNDMEGMILMSELSKRRFRSVNKLIRVGRHEVVLVLRVDSQKGYIDLSKRRVSPKDIIKCEEKFSKSKKVHQTVRHVAKEHGITVEELNEKAIWPLYERYGHALDALKEATMNPENVFKGLDISEEIKNSLLKDIKLRLTPQALKLRGRIDVWCFGYEGIDAVKEALKKGKEISNDKVSINIKLIAPPQYVIVTSCHDKDLGMAKIQEAMKVISDKIKEYKGGDFKQQGEILVIGGDEEKRLEELLDKHDGISSDDDDYNTSDEDDENSSEEDENTSEDEEEED</sequence>
<name>IF2A_PLAF7</name>
<feature type="chain" id="PRO_0000456973" description="Eukaryotic translation initiation factor 2 subunit 1">
    <location>
        <begin position="1"/>
        <end position="329"/>
    </location>
</feature>
<feature type="domain" description="S1 motif" evidence="3">
    <location>
        <begin position="24"/>
        <end position="95"/>
    </location>
</feature>
<feature type="region of interest" description="Disordered" evidence="4">
    <location>
        <begin position="291"/>
        <end position="329"/>
    </location>
</feature>
<feature type="compositionally biased region" description="Acidic residues" evidence="4">
    <location>
        <begin position="298"/>
        <end position="329"/>
    </location>
</feature>
<feature type="modified residue" description="Phosphoserine; by eIK1, eIK2 and PK4" evidence="5 6 7 8">
    <location>
        <position position="59"/>
    </location>
</feature>
<feature type="mutagenesis site" description="Loss of phosphorylation by eIK1. Loss of interaction with phosphatase IUS2." evidence="5 7">
    <original>S</original>
    <variation>A</variation>
    <location>
        <position position="59"/>
    </location>
</feature>
<feature type="mutagenesis site" description="Phosphomimetic mutant. No effect on the interaction with phosphatase IUS2." evidence="7">
    <original>S</original>
    <variation>D</variation>
    <location>
        <position position="59"/>
    </location>
</feature>
<evidence type="ECO:0000250" key="1">
    <source>
        <dbReference type="UniProtKB" id="A0A509AJP9"/>
    </source>
</evidence>
<evidence type="ECO:0000250" key="2">
    <source>
        <dbReference type="UniProtKB" id="P05198"/>
    </source>
</evidence>
<evidence type="ECO:0000255" key="3">
    <source>
        <dbReference type="PROSITE-ProRule" id="PRU00180"/>
    </source>
</evidence>
<evidence type="ECO:0000256" key="4">
    <source>
        <dbReference type="SAM" id="MobiDB-lite"/>
    </source>
</evidence>
<evidence type="ECO:0000269" key="5">
    <source>
    </source>
</evidence>
<evidence type="ECO:0000269" key="6">
    <source>
    </source>
</evidence>
<evidence type="ECO:0000269" key="7">
    <source>
    </source>
</evidence>
<evidence type="ECO:0000269" key="8">
    <source>
    </source>
</evidence>
<evidence type="ECO:0000303" key="9">
    <source>
    </source>
</evidence>
<evidence type="ECO:0000305" key="10"/>
<evidence type="ECO:0000305" key="11">
    <source>
    </source>
</evidence>
<evidence type="ECO:0000305" key="12">
    <source>
    </source>
</evidence>
<evidence type="ECO:0000305" key="13">
    <source>
    </source>
</evidence>
<evidence type="ECO:0000312" key="14">
    <source>
        <dbReference type="EMBL" id="CAD51023.1"/>
    </source>
</evidence>
<evidence type="ECO:0000312" key="15">
    <source>
        <dbReference type="Proteomes" id="UP000001450"/>
    </source>
</evidence>